<gene>
    <name evidence="5" type="primary">GH1</name>
    <name evidence="5" type="synonym">Saoffv11054913m</name>
    <name evidence="7" type="ORF">RND81_10G213900</name>
</gene>
<proteinExistence type="evidence at protein level"/>
<name>GH1_SAPOF</name>
<dbReference type="EC" id="2.4.1.-" evidence="4"/>
<dbReference type="EMBL" id="OR426398">
    <property type="protein sequence ID" value="WWM48151.1"/>
    <property type="molecule type" value="mRNA"/>
</dbReference>
<dbReference type="EMBL" id="JBDFQZ010000010">
    <property type="protein sequence ID" value="KAK9684494.1"/>
    <property type="molecule type" value="Genomic_DNA"/>
</dbReference>
<dbReference type="UniPathway" id="UPA00213"/>
<dbReference type="Proteomes" id="UP001443914">
    <property type="component" value="Unassembled WGS sequence"/>
</dbReference>
<dbReference type="GO" id="GO:0005737">
    <property type="term" value="C:cytoplasm"/>
    <property type="evidence" value="ECO:0000314"/>
    <property type="project" value="UniProtKB"/>
</dbReference>
<dbReference type="GO" id="GO:0008422">
    <property type="term" value="F:beta-glucosidase activity"/>
    <property type="evidence" value="ECO:0007669"/>
    <property type="project" value="TreeGrafter"/>
</dbReference>
<dbReference type="GO" id="GO:0016798">
    <property type="term" value="F:hydrolase activity, acting on glycosyl bonds"/>
    <property type="evidence" value="ECO:0000314"/>
    <property type="project" value="UniProtKB"/>
</dbReference>
<dbReference type="GO" id="GO:0005975">
    <property type="term" value="P:carbohydrate metabolic process"/>
    <property type="evidence" value="ECO:0007669"/>
    <property type="project" value="InterPro"/>
</dbReference>
<dbReference type="GO" id="GO:0016135">
    <property type="term" value="P:saponin biosynthetic process"/>
    <property type="evidence" value="ECO:0000314"/>
    <property type="project" value="UniProtKB"/>
</dbReference>
<dbReference type="GO" id="GO:0016104">
    <property type="term" value="P:triterpenoid biosynthetic process"/>
    <property type="evidence" value="ECO:0000314"/>
    <property type="project" value="UniProtKB"/>
</dbReference>
<dbReference type="FunFam" id="3.20.20.80:FF:000041">
    <property type="entry name" value="Beta-glucosidase 7"/>
    <property type="match status" value="1"/>
</dbReference>
<dbReference type="Gene3D" id="3.20.20.80">
    <property type="entry name" value="Glycosidases"/>
    <property type="match status" value="1"/>
</dbReference>
<dbReference type="InterPro" id="IPR001360">
    <property type="entry name" value="Glyco_hydro_1"/>
</dbReference>
<dbReference type="InterPro" id="IPR017853">
    <property type="entry name" value="Glycoside_hydrolase_SF"/>
</dbReference>
<dbReference type="PANTHER" id="PTHR10353:SF29">
    <property type="entry name" value="BETA-GLUCOSIDASE 11"/>
    <property type="match status" value="1"/>
</dbReference>
<dbReference type="PANTHER" id="PTHR10353">
    <property type="entry name" value="GLYCOSYL HYDROLASE"/>
    <property type="match status" value="1"/>
</dbReference>
<dbReference type="Pfam" id="PF00232">
    <property type="entry name" value="Glyco_hydro_1"/>
    <property type="match status" value="1"/>
</dbReference>
<dbReference type="PRINTS" id="PR00131">
    <property type="entry name" value="GLHYDRLASE1"/>
</dbReference>
<dbReference type="SUPFAM" id="SSF51445">
    <property type="entry name" value="(Trans)glycosidases"/>
    <property type="match status" value="1"/>
</dbReference>
<comment type="function">
    <text evidence="4">Component of the oleanane-type triterpene saponins (e.g. saponarioside A and saponarioside B) biosynthetic pathway, leading to the production of natural products with detergent properties used as traditional sources of soap (PubMed:39043959). Beta-glycosidase that catalyzes the transfer of glucose moiety to QA-triFRXX to produce QA-triF(Q)RXX via the elongation of the C-28 sugar chain with a D-quinovose (PubMed:39043959).</text>
</comment>
<comment type="pathway">
    <text evidence="4">Secondary metabolite biosynthesis; terpenoid biosynthesis.</text>
</comment>
<comment type="subcellular location">
    <subcellularLocation>
        <location evidence="4">Cytoplasm</location>
    </subcellularLocation>
</comment>
<comment type="tissue specificity">
    <text evidence="4">Mainly expressed in flowers, flower buds and young leaves, and, to a lesser extent, in old leaves, stems and roots.</text>
</comment>
<comment type="biotechnology">
    <text evidence="5">Soapwort saponins possess anticancer properties and are also being explored as enhancers for endosomal escape in targeted tumor therapies (PubMed:39043959). They may also serve as precursors for vaccine adjuvants (PubMed:39043959).</text>
</comment>
<comment type="similarity">
    <text evidence="6">Belongs to the glycosyl hydrolase 1 family.</text>
</comment>
<reference evidence="8" key="1">
    <citation type="journal article" date="2025" name="Nat. Chem. Biol.">
        <title>Unlocking saponin biosynthesis in soapwort.</title>
        <authorList>
            <person name="Jo S."/>
            <person name="El-Demerdash A."/>
            <person name="Owen C."/>
            <person name="Srivastava V."/>
            <person name="Wu D."/>
            <person name="Kikuchi S."/>
            <person name="Reed J."/>
            <person name="Hodgson H."/>
            <person name="Harkess A."/>
            <person name="Shu S."/>
            <person name="Plott C."/>
            <person name="Jenkins J."/>
            <person name="Williams M."/>
            <person name="Boston L.-B."/>
            <person name="Lacchini E."/>
            <person name="Qu T."/>
            <person name="Goossens A."/>
            <person name="Grimwood J."/>
            <person name="Schmutz J."/>
            <person name="Leebens-Mack J."/>
            <person name="Osbourn A."/>
        </authorList>
    </citation>
    <scope>NUCLEOTIDE SEQUENCE [MRNA]</scope>
    <scope>FUNCTION</scope>
    <scope>CATALYTIC ACTIVITY</scope>
    <scope>TISSUE SPECIFICITY</scope>
    <scope>SUBCELLULAR LOCATION</scope>
    <scope>PATHWAY</scope>
    <scope>BIOTECHNOLOGY</scope>
</reference>
<reference evidence="7" key="2">
    <citation type="submission" date="2024-03" db="EMBL/GenBank/DDBJ databases">
        <title>WGS assembly of Saponaria officinalis var. Norfolk2.</title>
        <authorList>
            <person name="Jenkins J."/>
            <person name="Shu S."/>
            <person name="Grimwood J."/>
            <person name="Barry K."/>
            <person name="Goodstein D."/>
            <person name="Schmutz J."/>
            <person name="Leebens-Mack J."/>
            <person name="Osbourn A."/>
        </authorList>
    </citation>
    <scope>NUCLEOTIDE SEQUENCE [LARGE SCALE GENOMIC DNA]</scope>
    <source>
        <strain>cv. Norfolk2</strain>
        <tissue>Leaf</tissue>
    </source>
</reference>
<keyword id="KW-0963">Cytoplasm</keyword>
<keyword id="KW-0328">Glycosyltransferase</keyword>
<keyword id="KW-0808">Transferase</keyword>
<feature type="chain" id="PRO_0000462366" description="Glycosyl hydrolase-like protein 1">
    <location>
        <begin position="1"/>
        <end position="449"/>
    </location>
</feature>
<feature type="active site" description="Proton donor" evidence="2">
    <location>
        <position position="165"/>
    </location>
</feature>
<feature type="active site" description="Nucleophile" evidence="2">
    <location>
        <position position="350"/>
    </location>
</feature>
<feature type="binding site" evidence="2">
    <location>
        <position position="22"/>
    </location>
    <ligand>
        <name>a beta-D-glucoside</name>
        <dbReference type="ChEBI" id="CHEBI:22798"/>
    </ligand>
</feature>
<feature type="binding site" evidence="2">
    <location>
        <position position="119"/>
    </location>
    <ligand>
        <name>a beta-D-glucoside</name>
        <dbReference type="ChEBI" id="CHEBI:22798"/>
    </ligand>
</feature>
<feature type="binding site" evidence="2">
    <location>
        <begin position="164"/>
        <end position="165"/>
    </location>
    <ligand>
        <name>a beta-D-glucoside</name>
        <dbReference type="ChEBI" id="CHEBI:22798"/>
    </ligand>
</feature>
<feature type="binding site" evidence="2">
    <location>
        <position position="292"/>
    </location>
    <ligand>
        <name>a beta-D-glucoside</name>
        <dbReference type="ChEBI" id="CHEBI:22798"/>
    </ligand>
</feature>
<feature type="binding site" evidence="3">
    <location>
        <position position="350"/>
    </location>
    <ligand>
        <name>a beta-D-glucoside</name>
        <dbReference type="ChEBI" id="CHEBI:22798"/>
    </ligand>
</feature>
<feature type="binding site" evidence="2">
    <location>
        <position position="393"/>
    </location>
    <ligand>
        <name>a beta-D-glucoside</name>
        <dbReference type="ChEBI" id="CHEBI:22798"/>
    </ligand>
</feature>
<feature type="binding site" evidence="1">
    <location>
        <position position="406"/>
    </location>
    <ligand>
        <name>a beta-D-glucoside</name>
        <dbReference type="ChEBI" id="CHEBI:22798"/>
    </ligand>
</feature>
<sequence>MVLSRLDFPSDFIFGSGTSASQVEGAALEDGKTSTAFEGFLTRMSGNDLSKGVEGYYKYKEDVQLMVQTGLDAYRFSISWSRLIPGGKGPVNPKGLQYYNNFIDELIKNGIQPHVTLLHFDIPDTLMTAYNGLKGQEFVEDFTAFADVCFKEFGDRVLYWTTVNEANNFASLTLDEGNFMPSTEPYIRGHNIILAHASAVKLYREKYKKTQNGFIGLNLYASWYFPETDDEQDSIAAQRAIDFTIGWIMQPLIYGEYPETLKKQVGERLPTFTKEESTFVKNSFDFIGVNCYVGTAVKDDPDSCNSKNKTIITDMSAKLSPKGELGGAYMKGLLEYFKRDYGNPPIYIQENGYWTPRELGVNDASRIEYHTASLASMHDAMKNGANVKGYFQWSFLDLLEVFKYSYGLYHVDLEDPTRERRPKASANWYAEFLKGCATSNGNAKVETPL</sequence>
<organism>
    <name type="scientific">Saponaria officinalis</name>
    <name type="common">Common soapwort</name>
    <name type="synonym">Lychnis saponaria</name>
    <dbReference type="NCBI Taxonomy" id="3572"/>
    <lineage>
        <taxon>Eukaryota</taxon>
        <taxon>Viridiplantae</taxon>
        <taxon>Streptophyta</taxon>
        <taxon>Embryophyta</taxon>
        <taxon>Tracheophyta</taxon>
        <taxon>Spermatophyta</taxon>
        <taxon>Magnoliopsida</taxon>
        <taxon>eudicotyledons</taxon>
        <taxon>Gunneridae</taxon>
        <taxon>Pentapetalae</taxon>
        <taxon>Caryophyllales</taxon>
        <taxon>Caryophyllaceae</taxon>
        <taxon>Caryophylleae</taxon>
        <taxon>Saponaria</taxon>
    </lineage>
</organism>
<accession>A0AAW1I778</accession>
<evidence type="ECO:0000250" key="1">
    <source>
        <dbReference type="UniProtKB" id="Q1XH05"/>
    </source>
</evidence>
<evidence type="ECO:0000250" key="2">
    <source>
        <dbReference type="UniProtKB" id="Q7XSK0"/>
    </source>
</evidence>
<evidence type="ECO:0000250" key="3">
    <source>
        <dbReference type="UniProtKB" id="Q9SPP9"/>
    </source>
</evidence>
<evidence type="ECO:0000269" key="4">
    <source>
    </source>
</evidence>
<evidence type="ECO:0000303" key="5">
    <source>
    </source>
</evidence>
<evidence type="ECO:0000305" key="6"/>
<evidence type="ECO:0000312" key="7">
    <source>
        <dbReference type="EMBL" id="KAK9684494.1"/>
    </source>
</evidence>
<evidence type="ECO:0000312" key="8">
    <source>
        <dbReference type="EMBL" id="WWM48151.1"/>
    </source>
</evidence>
<protein>
    <recommendedName>
        <fullName evidence="5">Glycosyl hydrolase-like protein 1</fullName>
        <shortName evidence="5">SoGH1</shortName>
        <ecNumber evidence="4">2.4.1.-</ecNumber>
    </recommendedName>
</protein>